<reference key="1">
    <citation type="journal article" date="2007" name="Proc. Natl. Acad. Sci. U.S.A.">
        <title>Genome sequencing and comparative analysis of Saccharomyces cerevisiae strain YJM789.</title>
        <authorList>
            <person name="Wei W."/>
            <person name="McCusker J.H."/>
            <person name="Hyman R.W."/>
            <person name="Jones T."/>
            <person name="Ning Y."/>
            <person name="Cao Z."/>
            <person name="Gu Z."/>
            <person name="Bruno D."/>
            <person name="Miranda M."/>
            <person name="Nguyen M."/>
            <person name="Wilhelmy J."/>
            <person name="Komp C."/>
            <person name="Tamse R."/>
            <person name="Wang X."/>
            <person name="Jia P."/>
            <person name="Luedi P."/>
            <person name="Oefner P.J."/>
            <person name="David L."/>
            <person name="Dietrich F.S."/>
            <person name="Li Y."/>
            <person name="Davis R.W."/>
            <person name="Steinmetz L.M."/>
        </authorList>
    </citation>
    <scope>NUCLEOTIDE SEQUENCE [LARGE SCALE GENOMIC DNA]</scope>
    <source>
        <strain>YJM789</strain>
    </source>
</reference>
<comment type="function">
    <text evidence="1">May negatively regulate the SNF1 kinase by promoting the interaction of the REG1/GLC7 phosphatase complex with the kinase. Deletion of SIP5 promotes resistance to artemisinin, which is probably an indirect effect of an action on the electron transport chain (By similarity).</text>
</comment>
<comment type="subunit">
    <text evidence="1">Interacts with SNF1 and REG1.</text>
</comment>
<comment type="subcellular location">
    <subcellularLocation>
        <location evidence="1">Cytoplasm</location>
    </subcellularLocation>
</comment>
<comment type="similarity">
    <text evidence="4">Belongs to the SIP5 family.</text>
</comment>
<evidence type="ECO:0000250" key="1"/>
<evidence type="ECO:0000250" key="2">
    <source>
        <dbReference type="UniProtKB" id="P40210"/>
    </source>
</evidence>
<evidence type="ECO:0000256" key="3">
    <source>
        <dbReference type="SAM" id="MobiDB-lite"/>
    </source>
</evidence>
<evidence type="ECO:0000305" key="4"/>
<gene>
    <name type="primary">SIP5</name>
    <name type="ORF">SCY_4316</name>
</gene>
<name>SIP5_YEAS7</name>
<keyword id="KW-0963">Cytoplasm</keyword>
<keyword id="KW-0597">Phosphoprotein</keyword>
<accession>A6ZMK0</accession>
<organism>
    <name type="scientific">Saccharomyces cerevisiae (strain YJM789)</name>
    <name type="common">Baker's yeast</name>
    <dbReference type="NCBI Taxonomy" id="307796"/>
    <lineage>
        <taxon>Eukaryota</taxon>
        <taxon>Fungi</taxon>
        <taxon>Dikarya</taxon>
        <taxon>Ascomycota</taxon>
        <taxon>Saccharomycotina</taxon>
        <taxon>Saccharomycetes</taxon>
        <taxon>Saccharomycetales</taxon>
        <taxon>Saccharomycetaceae</taxon>
        <taxon>Saccharomyces</taxon>
    </lineage>
</organism>
<protein>
    <recommendedName>
        <fullName>Protein SIP5</fullName>
    </recommendedName>
    <alternativeName>
        <fullName>SNF1-interacting protein 5</fullName>
    </alternativeName>
</protein>
<dbReference type="EMBL" id="AAFW02000021">
    <property type="protein sequence ID" value="EDN64074.1"/>
    <property type="molecule type" value="Genomic_DNA"/>
</dbReference>
<dbReference type="HOGENOM" id="CLU_009068_2_0_1"/>
<dbReference type="Proteomes" id="UP000007060">
    <property type="component" value="Unassembled WGS sequence"/>
</dbReference>
<dbReference type="GO" id="GO:0005737">
    <property type="term" value="C:cytoplasm"/>
    <property type="evidence" value="ECO:0007669"/>
    <property type="project" value="UniProtKB-SubCell"/>
</dbReference>
<dbReference type="CDD" id="cd24139">
    <property type="entry name" value="SIP5-like"/>
    <property type="match status" value="1"/>
</dbReference>
<dbReference type="InterPro" id="IPR039301">
    <property type="entry name" value="Sip5/DA2"/>
</dbReference>
<dbReference type="PANTHER" id="PTHR31315">
    <property type="entry name" value="PROTEIN SIP5"/>
    <property type="match status" value="1"/>
</dbReference>
<dbReference type="PANTHER" id="PTHR31315:SF1">
    <property type="entry name" value="PROTEIN SIP5"/>
    <property type="match status" value="1"/>
</dbReference>
<feature type="chain" id="PRO_0000333446" description="Protein SIP5">
    <location>
        <begin position="1"/>
        <end position="489"/>
    </location>
</feature>
<feature type="region of interest" description="Disordered" evidence="3">
    <location>
        <begin position="1"/>
        <end position="44"/>
    </location>
</feature>
<feature type="region of interest" description="Disordered" evidence="3">
    <location>
        <begin position="57"/>
        <end position="84"/>
    </location>
</feature>
<feature type="region of interest" description="Disordered" evidence="3">
    <location>
        <begin position="419"/>
        <end position="489"/>
    </location>
</feature>
<feature type="compositionally biased region" description="Polar residues" evidence="3">
    <location>
        <begin position="21"/>
        <end position="32"/>
    </location>
</feature>
<feature type="compositionally biased region" description="Polar residues" evidence="3">
    <location>
        <begin position="57"/>
        <end position="69"/>
    </location>
</feature>
<feature type="compositionally biased region" description="Basic and acidic residues" evidence="3">
    <location>
        <begin position="461"/>
        <end position="477"/>
    </location>
</feature>
<feature type="modified residue" description="Phosphoserine" evidence="2">
    <location>
        <position position="13"/>
    </location>
</feature>
<feature type="modified residue" description="Phosphothreonine" evidence="2">
    <location>
        <position position="183"/>
    </location>
</feature>
<feature type="modified residue" description="Phosphothreonine" evidence="2">
    <location>
        <position position="433"/>
    </location>
</feature>
<feature type="modified residue" description="Phosphoserine" evidence="2">
    <location>
        <position position="436"/>
    </location>
</feature>
<feature type="modified residue" description="Phosphothreonine" evidence="2">
    <location>
        <position position="438"/>
    </location>
</feature>
<sequence>MGNVPGKIDQEDSFNDVRPDSSYNTTSSNSVIKQYDEEASSRVRTRRTTSLVNNILNGNNARTKTGSHLSSTSRRKTSREKELAKEAHAKQLVVRCSETVDGGFLAPFGCYSFEKLDYDATVVKNLIIKRKLAPFYTPLQDFDESWTRDELIKIVDGLPLHDTFDENLEEFEDVPIGNLRKSTFNELIDKSLSKKEQRRMHAKIFRARLYKKRILWQENENETFLERKLEMKRIGSKSSNVEDNTSSQPRKNYHLPSDDLKYTLYKNGSECPICFLYFPGPFNYSKCCQQPICTECFVQIKRADPHFPHDEVDPTEPQTNDSEKDPNLLTSEPANCPYCATASFSITYQPPTNRETGIGGMPADSYVYKDAAISRADGGQPNIPAITSDTIRPDWEIKLNKERARLMRRSANATAIHISNRLIDPSHSTRRNTSHSITPIHDESTSASRSPEPTINELEDQMVREAIRLSLEDQDNRKKSKNRNTSLRP</sequence>
<proteinExistence type="inferred from homology"/>